<sequence>MAKLRPYYEESQSAYDISDDFFALFLDPTWVYTCAYFERDDMTLEEAQLAKVDLALDKLNLEPGMTLLDVGCGWGGALVRAVEKYDVNVIGLTLSRNHYERSKDRLAAIGTQRRAEARLQGWEEFEENVDRIVSFEAFDAFKKERYLTFFERSYDILPDDGRMLLHSLFTYDRRWLHEQGIALTMSDLRFLKFLRESIFPGGELPSEPDIVDNAQAAGFTIEHVQLLQQHYARTLDAWAANLQAARERAIAVQSEEVYNNFMHYLTGCAERFRRGLINVAQFTMTK</sequence>
<comment type="function">
    <text evidence="1">Involved in the conversion of a cis-olefin into a trans-olefin with concomitant introduction of an allylic methyl branch at the proximal position of the precursor to both the methoxy and ketomycolic acids. It directly affects the cis- to trans ratio and indirectly affects the keto to methoxy ratio (By similarity).</text>
</comment>
<comment type="pathway">
    <text>Lipid metabolism; mycolic acid biosynthesis.</text>
</comment>
<comment type="similarity">
    <text evidence="2">Belongs to the CFA/CMAS family.</text>
</comment>
<protein>
    <recommendedName>
        <fullName>Mycolic acid methyltransferase MmaA1</fullName>
        <ecNumber>2.1.1.-</ecNumber>
    </recommendedName>
    <alternativeName>
        <fullName>S-adenosylmethionine-dependent methyltransferase</fullName>
        <shortName>AdoMet-MT</shortName>
        <shortName>SAM-MT</shortName>
    </alternativeName>
</protein>
<keyword id="KW-0444">Lipid biosynthesis</keyword>
<keyword id="KW-0443">Lipid metabolism</keyword>
<keyword id="KW-0489">Methyltransferase</keyword>
<keyword id="KW-1185">Reference proteome</keyword>
<keyword id="KW-0949">S-adenosyl-L-methionine</keyword>
<keyword id="KW-0808">Transferase</keyword>
<accession>A5U030</accession>
<accession>P0A5Q0</accession>
<accession>P72025</accession>
<accession>P94922</accession>
<accession>P96934</accession>
<name>MMAA1_MYCTA</name>
<organism>
    <name type="scientific">Mycobacterium tuberculosis (strain ATCC 25177 / H37Ra)</name>
    <dbReference type="NCBI Taxonomy" id="419947"/>
    <lineage>
        <taxon>Bacteria</taxon>
        <taxon>Bacillati</taxon>
        <taxon>Actinomycetota</taxon>
        <taxon>Actinomycetes</taxon>
        <taxon>Mycobacteriales</taxon>
        <taxon>Mycobacteriaceae</taxon>
        <taxon>Mycobacterium</taxon>
        <taxon>Mycobacterium tuberculosis complex</taxon>
    </lineage>
</organism>
<proteinExistence type="evidence at protein level"/>
<reference key="1">
    <citation type="journal article" date="1996" name="Proc. Natl. Acad. Sci. U.S.A.">
        <title>A common mechanism for the biosynthesis of methoxy and cyclopropyl mycolic acids in Mycobacterium tuberculosis.</title>
        <authorList>
            <person name="Yuan Y."/>
            <person name="Barry C.E. III"/>
        </authorList>
    </citation>
    <scope>NUCLEOTIDE SEQUENCE [GENOMIC DNA]</scope>
    <scope>CHARACTERIZATION</scope>
</reference>
<reference key="2">
    <citation type="journal article" date="2008" name="PLoS ONE">
        <title>Genetic basis of virulence attenuation revealed by comparative genomic analysis of Mycobacterium tuberculosis strain H37Ra versus H37Rv.</title>
        <authorList>
            <person name="Zheng H."/>
            <person name="Lu L."/>
            <person name="Wang B."/>
            <person name="Pu S."/>
            <person name="Zhang X."/>
            <person name="Zhu G."/>
            <person name="Shi W."/>
            <person name="Zhang L."/>
            <person name="Wang H."/>
            <person name="Wang S."/>
            <person name="Zhao G."/>
            <person name="Zhang Y."/>
        </authorList>
    </citation>
    <scope>NUCLEOTIDE SEQUENCE [LARGE SCALE GENOMIC DNA]</scope>
    <source>
        <strain>ATCC 25177 / H37Ra</strain>
    </source>
</reference>
<dbReference type="EC" id="2.1.1.-"/>
<dbReference type="EMBL" id="U66108">
    <property type="protein sequence ID" value="AAC44616.1"/>
    <property type="molecule type" value="Genomic_DNA"/>
</dbReference>
<dbReference type="EMBL" id="CP000611">
    <property type="protein sequence ID" value="ABQ72380.1"/>
    <property type="molecule type" value="Genomic_DNA"/>
</dbReference>
<dbReference type="RefSeq" id="WP_003403310.1">
    <property type="nucleotide sequence ID" value="NZ_CP016972.1"/>
</dbReference>
<dbReference type="SMR" id="A5U030"/>
<dbReference type="GeneID" id="45424605"/>
<dbReference type="KEGG" id="mra:MRA_0656"/>
<dbReference type="eggNOG" id="COG2230">
    <property type="taxonomic scope" value="Bacteria"/>
</dbReference>
<dbReference type="HOGENOM" id="CLU_026434_3_0_11"/>
<dbReference type="UniPathway" id="UPA00915"/>
<dbReference type="Proteomes" id="UP000001988">
    <property type="component" value="Chromosome"/>
</dbReference>
<dbReference type="GO" id="GO:0008168">
    <property type="term" value="F:methyltransferase activity"/>
    <property type="evidence" value="ECO:0007669"/>
    <property type="project" value="UniProtKB-KW"/>
</dbReference>
<dbReference type="GO" id="GO:0008610">
    <property type="term" value="P:lipid biosynthetic process"/>
    <property type="evidence" value="ECO:0007669"/>
    <property type="project" value="InterPro"/>
</dbReference>
<dbReference type="GO" id="GO:0032259">
    <property type="term" value="P:methylation"/>
    <property type="evidence" value="ECO:0007669"/>
    <property type="project" value="UniProtKB-KW"/>
</dbReference>
<dbReference type="CDD" id="cd02440">
    <property type="entry name" value="AdoMet_MTases"/>
    <property type="match status" value="1"/>
</dbReference>
<dbReference type="FunFam" id="3.40.50.150:FF:000115">
    <property type="entry name" value="Cyclopropane mycolic acid synthase 1"/>
    <property type="match status" value="1"/>
</dbReference>
<dbReference type="Gene3D" id="3.40.50.150">
    <property type="entry name" value="Vaccinia Virus protein VP39"/>
    <property type="match status" value="1"/>
</dbReference>
<dbReference type="InterPro" id="IPR050723">
    <property type="entry name" value="CFA/CMAS"/>
</dbReference>
<dbReference type="InterPro" id="IPR003333">
    <property type="entry name" value="CMAS"/>
</dbReference>
<dbReference type="InterPro" id="IPR047672">
    <property type="entry name" value="CMAS_actinobact"/>
</dbReference>
<dbReference type="InterPro" id="IPR029063">
    <property type="entry name" value="SAM-dependent_MTases_sf"/>
</dbReference>
<dbReference type="NCBIfam" id="NF040660">
    <property type="entry name" value="mycolic_MTase"/>
    <property type="match status" value="1"/>
</dbReference>
<dbReference type="PANTHER" id="PTHR43667">
    <property type="entry name" value="CYCLOPROPANE-FATTY-ACYL-PHOSPHOLIPID SYNTHASE"/>
    <property type="match status" value="1"/>
</dbReference>
<dbReference type="PANTHER" id="PTHR43667:SF1">
    <property type="entry name" value="CYCLOPROPANE-FATTY-ACYL-PHOSPHOLIPID SYNTHASE"/>
    <property type="match status" value="1"/>
</dbReference>
<dbReference type="Pfam" id="PF02353">
    <property type="entry name" value="CMAS"/>
    <property type="match status" value="1"/>
</dbReference>
<dbReference type="PIRSF" id="PIRSF003085">
    <property type="entry name" value="CMAS"/>
    <property type="match status" value="1"/>
</dbReference>
<dbReference type="SUPFAM" id="SSF53335">
    <property type="entry name" value="S-adenosyl-L-methionine-dependent methyltransferases"/>
    <property type="match status" value="1"/>
</dbReference>
<feature type="chain" id="PRO_0000300064" description="Mycolic acid methyltransferase MmaA1">
    <location>
        <begin position="1"/>
        <end position="286"/>
    </location>
</feature>
<feature type="active site" evidence="1">
    <location>
        <position position="268"/>
    </location>
</feature>
<feature type="binding site" evidence="1">
    <location>
        <begin position="32"/>
        <end position="33"/>
    </location>
    <ligand>
        <name>S-adenosyl-L-methionine</name>
        <dbReference type="ChEBI" id="CHEBI:59789"/>
    </ligand>
</feature>
<feature type="binding site" evidence="1">
    <location>
        <begin position="71"/>
        <end position="73"/>
    </location>
    <ligand>
        <name>S-adenosyl-L-methionine</name>
        <dbReference type="ChEBI" id="CHEBI:59789"/>
    </ligand>
</feature>
<feature type="binding site" evidence="1">
    <location>
        <begin position="93"/>
        <end position="98"/>
    </location>
    <ligand>
        <name>S-adenosyl-L-methionine</name>
        <dbReference type="ChEBI" id="CHEBI:59789"/>
    </ligand>
</feature>
<feature type="binding site" evidence="1">
    <location>
        <begin position="122"/>
        <end position="123"/>
    </location>
    <ligand>
        <name>S-adenosyl-L-methionine</name>
        <dbReference type="ChEBI" id="CHEBI:59789"/>
    </ligand>
</feature>
<feature type="sequence conflict" description="In Ref. 1; AAC44616." evidence="2" ref="1">
    <original>DLRFLKF</original>
    <variation>ELPIPQI</variation>
    <location>
        <begin position="187"/>
        <end position="193"/>
    </location>
</feature>
<gene>
    <name type="primary">mmaA1</name>
    <name type="synonym">mma1</name>
    <name type="ordered locus">MRA_0656</name>
</gene>
<evidence type="ECO:0000250" key="1"/>
<evidence type="ECO:0000305" key="2"/>